<gene>
    <name type="primary">helC</name>
</gene>
<protein>
    <recommendedName>
        <fullName>Heme exporter protein C</fullName>
    </recommendedName>
    <alternativeName>
        <fullName>Cytochrome c-type biogenesis protein HelC</fullName>
    </alternativeName>
</protein>
<sequence length="78" mass="8989">IKYSVEWWNTLHQGATFTLTEKPAMPVEMWAPLLLMVLGFYCFFGAVLLLRMRLEVLKREARTSWVKAEVQTSLGARG</sequence>
<comment type="function">
    <text evidence="1">Required for the export of heme to the periplasm for the biogenesis of c-type cytochromes.</text>
</comment>
<comment type="subcellular location">
    <subcellularLocation>
        <location evidence="3">Cell inner membrane</location>
        <topology evidence="3">Multi-pass membrane protein</topology>
    </subcellularLocation>
</comment>
<comment type="similarity">
    <text evidence="3">Belongs to the CcmC/CycZ/HelC family.</text>
</comment>
<evidence type="ECO:0000250" key="1"/>
<evidence type="ECO:0000255" key="2"/>
<evidence type="ECO:0000305" key="3"/>
<accession>P52222</accession>
<organism>
    <name type="scientific">Pseudomonas fluorescens</name>
    <dbReference type="NCBI Taxonomy" id="294"/>
    <lineage>
        <taxon>Bacteria</taxon>
        <taxon>Pseudomonadati</taxon>
        <taxon>Pseudomonadota</taxon>
        <taxon>Gammaproteobacteria</taxon>
        <taxon>Pseudomonadales</taxon>
        <taxon>Pseudomonadaceae</taxon>
        <taxon>Pseudomonas</taxon>
    </lineage>
</organism>
<dbReference type="EMBL" id="U44827">
    <property type="protein sequence ID" value="AAC44224.1"/>
    <property type="molecule type" value="Genomic_DNA"/>
</dbReference>
<dbReference type="SMR" id="P52222"/>
<dbReference type="eggNOG" id="COG0755">
    <property type="taxonomic scope" value="Bacteria"/>
</dbReference>
<dbReference type="GO" id="GO:0005886">
    <property type="term" value="C:plasma membrane"/>
    <property type="evidence" value="ECO:0007669"/>
    <property type="project" value="UniProtKB-SubCell"/>
</dbReference>
<dbReference type="GO" id="GO:0017004">
    <property type="term" value="P:cytochrome complex assembly"/>
    <property type="evidence" value="ECO:0007669"/>
    <property type="project" value="UniProtKB-KW"/>
</dbReference>
<dbReference type="InterPro" id="IPR008983">
    <property type="entry name" value="Tumour_necrosis_fac-like_dom"/>
</dbReference>
<dbReference type="SUPFAM" id="SSF49842">
    <property type="entry name" value="TNF-like"/>
    <property type="match status" value="1"/>
</dbReference>
<reference key="1">
    <citation type="submission" date="1996-01" db="EMBL/GenBank/DDBJ databases">
        <authorList>
            <person name="Yang C.H."/>
            <person name="Azad H.R."/>
            <person name="Cooksey D.A."/>
        </authorList>
    </citation>
    <scope>NUCLEOTIDE SEQUENCE [GENOMIC DNA]</scope>
    <source>
        <strain>09906</strain>
    </source>
</reference>
<feature type="chain" id="PRO_0000201558" description="Heme exporter protein C">
    <location>
        <begin position="1" status="less than"/>
        <end position="78"/>
    </location>
</feature>
<feature type="transmembrane region" description="Helical" evidence="2">
    <location>
        <begin position="30"/>
        <end position="50"/>
    </location>
</feature>
<feature type="non-terminal residue">
    <location>
        <position position="1"/>
    </location>
</feature>
<proteinExistence type="inferred from homology"/>
<keyword id="KW-0997">Cell inner membrane</keyword>
<keyword id="KW-1003">Cell membrane</keyword>
<keyword id="KW-0201">Cytochrome c-type biogenesis</keyword>
<keyword id="KW-0472">Membrane</keyword>
<keyword id="KW-0812">Transmembrane</keyword>
<keyword id="KW-1133">Transmembrane helix</keyword>
<keyword id="KW-0813">Transport</keyword>
<name>CCMC_PSEFL</name>